<dbReference type="EMBL" id="CP000029">
    <property type="protein sequence ID" value="AAW55183.1"/>
    <property type="molecule type" value="Genomic_DNA"/>
</dbReference>
<dbReference type="RefSeq" id="WP_001829714.1">
    <property type="nucleotide sequence ID" value="NC_002976.3"/>
</dbReference>
<dbReference type="SMR" id="Q5HM32"/>
<dbReference type="STRING" id="176279.SERP1798"/>
<dbReference type="GeneID" id="63934738"/>
<dbReference type="KEGG" id="ser:SERP1798"/>
<dbReference type="eggNOG" id="COG0103">
    <property type="taxonomic scope" value="Bacteria"/>
</dbReference>
<dbReference type="HOGENOM" id="CLU_046483_2_1_9"/>
<dbReference type="Proteomes" id="UP000000531">
    <property type="component" value="Chromosome"/>
</dbReference>
<dbReference type="GO" id="GO:0022627">
    <property type="term" value="C:cytosolic small ribosomal subunit"/>
    <property type="evidence" value="ECO:0007669"/>
    <property type="project" value="TreeGrafter"/>
</dbReference>
<dbReference type="GO" id="GO:0003723">
    <property type="term" value="F:RNA binding"/>
    <property type="evidence" value="ECO:0007669"/>
    <property type="project" value="TreeGrafter"/>
</dbReference>
<dbReference type="GO" id="GO:0003735">
    <property type="term" value="F:structural constituent of ribosome"/>
    <property type="evidence" value="ECO:0007669"/>
    <property type="project" value="InterPro"/>
</dbReference>
<dbReference type="GO" id="GO:0006412">
    <property type="term" value="P:translation"/>
    <property type="evidence" value="ECO:0007669"/>
    <property type="project" value="UniProtKB-UniRule"/>
</dbReference>
<dbReference type="FunFam" id="3.30.230.10:FF:000001">
    <property type="entry name" value="30S ribosomal protein S9"/>
    <property type="match status" value="1"/>
</dbReference>
<dbReference type="Gene3D" id="3.30.230.10">
    <property type="match status" value="1"/>
</dbReference>
<dbReference type="HAMAP" id="MF_00532_B">
    <property type="entry name" value="Ribosomal_uS9_B"/>
    <property type="match status" value="1"/>
</dbReference>
<dbReference type="InterPro" id="IPR020568">
    <property type="entry name" value="Ribosomal_Su5_D2-typ_SF"/>
</dbReference>
<dbReference type="InterPro" id="IPR000754">
    <property type="entry name" value="Ribosomal_uS9"/>
</dbReference>
<dbReference type="InterPro" id="IPR023035">
    <property type="entry name" value="Ribosomal_uS9_bac/plastid"/>
</dbReference>
<dbReference type="InterPro" id="IPR020574">
    <property type="entry name" value="Ribosomal_uS9_CS"/>
</dbReference>
<dbReference type="InterPro" id="IPR014721">
    <property type="entry name" value="Ribsml_uS5_D2-typ_fold_subgr"/>
</dbReference>
<dbReference type="NCBIfam" id="NF001099">
    <property type="entry name" value="PRK00132.1"/>
    <property type="match status" value="1"/>
</dbReference>
<dbReference type="PANTHER" id="PTHR21569">
    <property type="entry name" value="RIBOSOMAL PROTEIN S9"/>
    <property type="match status" value="1"/>
</dbReference>
<dbReference type="PANTHER" id="PTHR21569:SF1">
    <property type="entry name" value="SMALL RIBOSOMAL SUBUNIT PROTEIN US9M"/>
    <property type="match status" value="1"/>
</dbReference>
<dbReference type="Pfam" id="PF00380">
    <property type="entry name" value="Ribosomal_S9"/>
    <property type="match status" value="1"/>
</dbReference>
<dbReference type="SUPFAM" id="SSF54211">
    <property type="entry name" value="Ribosomal protein S5 domain 2-like"/>
    <property type="match status" value="1"/>
</dbReference>
<dbReference type="PROSITE" id="PS00360">
    <property type="entry name" value="RIBOSOMAL_S9"/>
    <property type="match status" value="1"/>
</dbReference>
<accession>Q5HM32</accession>
<proteinExistence type="inferred from homology"/>
<gene>
    <name evidence="1" type="primary">rpsI</name>
    <name type="ordered locus">SERP1798</name>
</gene>
<comment type="similarity">
    <text evidence="1">Belongs to the universal ribosomal protein uS9 family.</text>
</comment>
<feature type="chain" id="PRO_0000111411" description="Small ribosomal subunit protein uS9">
    <location>
        <begin position="1"/>
        <end position="130"/>
    </location>
</feature>
<feature type="region of interest" description="Disordered" evidence="2">
    <location>
        <begin position="98"/>
        <end position="130"/>
    </location>
</feature>
<feature type="compositionally biased region" description="Basic residues" evidence="2">
    <location>
        <begin position="111"/>
        <end position="130"/>
    </location>
</feature>
<name>RS9_STAEQ</name>
<reference key="1">
    <citation type="journal article" date="2005" name="J. Bacteriol.">
        <title>Insights on evolution of virulence and resistance from the complete genome analysis of an early methicillin-resistant Staphylococcus aureus strain and a biofilm-producing methicillin-resistant Staphylococcus epidermidis strain.</title>
        <authorList>
            <person name="Gill S.R."/>
            <person name="Fouts D.E."/>
            <person name="Archer G.L."/>
            <person name="Mongodin E.F."/>
            <person name="DeBoy R.T."/>
            <person name="Ravel J."/>
            <person name="Paulsen I.T."/>
            <person name="Kolonay J.F."/>
            <person name="Brinkac L.M."/>
            <person name="Beanan M.J."/>
            <person name="Dodson R.J."/>
            <person name="Daugherty S.C."/>
            <person name="Madupu R."/>
            <person name="Angiuoli S.V."/>
            <person name="Durkin A.S."/>
            <person name="Haft D.H."/>
            <person name="Vamathevan J.J."/>
            <person name="Khouri H."/>
            <person name="Utterback T.R."/>
            <person name="Lee C."/>
            <person name="Dimitrov G."/>
            <person name="Jiang L."/>
            <person name="Qin H."/>
            <person name="Weidman J."/>
            <person name="Tran K."/>
            <person name="Kang K.H."/>
            <person name="Hance I.R."/>
            <person name="Nelson K.E."/>
            <person name="Fraser C.M."/>
        </authorList>
    </citation>
    <scope>NUCLEOTIDE SEQUENCE [LARGE SCALE GENOMIC DNA]</scope>
    <source>
        <strain>ATCC 35984 / DSM 28319 / BCRC 17069 / CCUG 31568 / BM 3577 / RP62A</strain>
    </source>
</reference>
<organism>
    <name type="scientific">Staphylococcus epidermidis (strain ATCC 35984 / DSM 28319 / BCRC 17069 / CCUG 31568 / BM 3577 / RP62A)</name>
    <dbReference type="NCBI Taxonomy" id="176279"/>
    <lineage>
        <taxon>Bacteria</taxon>
        <taxon>Bacillati</taxon>
        <taxon>Bacillota</taxon>
        <taxon>Bacilli</taxon>
        <taxon>Bacillales</taxon>
        <taxon>Staphylococcaceae</taxon>
        <taxon>Staphylococcus</taxon>
    </lineage>
</organism>
<sequence length="130" mass="14646">MAQVEYKGTGRRKNSVARVRLVPGEGNITVNERDVRDYLPFESLILDLNQPFDVTETKGNYDVLVNVHGGGFTGQAQAIRHGIARALLEADPEYRGSLKRAGLLTRDPRMKERKKPGLKKARRSPQFSKR</sequence>
<evidence type="ECO:0000255" key="1">
    <source>
        <dbReference type="HAMAP-Rule" id="MF_00532"/>
    </source>
</evidence>
<evidence type="ECO:0000256" key="2">
    <source>
        <dbReference type="SAM" id="MobiDB-lite"/>
    </source>
</evidence>
<evidence type="ECO:0000305" key="3"/>
<protein>
    <recommendedName>
        <fullName evidence="1">Small ribosomal subunit protein uS9</fullName>
    </recommendedName>
    <alternativeName>
        <fullName evidence="3">30S ribosomal protein S9</fullName>
    </alternativeName>
</protein>
<keyword id="KW-1185">Reference proteome</keyword>
<keyword id="KW-0687">Ribonucleoprotein</keyword>
<keyword id="KW-0689">Ribosomal protein</keyword>